<protein>
    <recommendedName>
        <fullName evidence="1">Lysine--tRNA ligase</fullName>
        <ecNumber evidence="1">6.1.1.6</ecNumber>
    </recommendedName>
    <alternativeName>
        <fullName evidence="1">Lysyl-tRNA synthetase</fullName>
        <shortName evidence="1">LysRS</shortName>
    </alternativeName>
</protein>
<gene>
    <name evidence="1" type="primary">lysS</name>
    <name type="ordered locus">Pcryo_1409</name>
</gene>
<dbReference type="EC" id="6.1.1.6" evidence="1"/>
<dbReference type="EMBL" id="CP000323">
    <property type="protein sequence ID" value="ABE75188.1"/>
    <property type="molecule type" value="Genomic_DNA"/>
</dbReference>
<dbReference type="RefSeq" id="WP_011513740.1">
    <property type="nucleotide sequence ID" value="NC_007969.1"/>
</dbReference>
<dbReference type="SMR" id="Q1QAW5"/>
<dbReference type="STRING" id="335284.Pcryo_1409"/>
<dbReference type="KEGG" id="pcr:Pcryo_1409"/>
<dbReference type="eggNOG" id="COG1190">
    <property type="taxonomic scope" value="Bacteria"/>
</dbReference>
<dbReference type="HOGENOM" id="CLU_008255_6_0_6"/>
<dbReference type="Proteomes" id="UP000002425">
    <property type="component" value="Chromosome"/>
</dbReference>
<dbReference type="GO" id="GO:0005829">
    <property type="term" value="C:cytosol"/>
    <property type="evidence" value="ECO:0007669"/>
    <property type="project" value="TreeGrafter"/>
</dbReference>
<dbReference type="GO" id="GO:0005524">
    <property type="term" value="F:ATP binding"/>
    <property type="evidence" value="ECO:0007669"/>
    <property type="project" value="UniProtKB-UniRule"/>
</dbReference>
<dbReference type="GO" id="GO:0004824">
    <property type="term" value="F:lysine-tRNA ligase activity"/>
    <property type="evidence" value="ECO:0007669"/>
    <property type="project" value="UniProtKB-UniRule"/>
</dbReference>
<dbReference type="GO" id="GO:0000287">
    <property type="term" value="F:magnesium ion binding"/>
    <property type="evidence" value="ECO:0007669"/>
    <property type="project" value="UniProtKB-UniRule"/>
</dbReference>
<dbReference type="GO" id="GO:0000049">
    <property type="term" value="F:tRNA binding"/>
    <property type="evidence" value="ECO:0007669"/>
    <property type="project" value="TreeGrafter"/>
</dbReference>
<dbReference type="GO" id="GO:0006430">
    <property type="term" value="P:lysyl-tRNA aminoacylation"/>
    <property type="evidence" value="ECO:0007669"/>
    <property type="project" value="UniProtKB-UniRule"/>
</dbReference>
<dbReference type="CDD" id="cd00775">
    <property type="entry name" value="LysRS_core"/>
    <property type="match status" value="1"/>
</dbReference>
<dbReference type="CDD" id="cd04322">
    <property type="entry name" value="LysRS_N"/>
    <property type="match status" value="1"/>
</dbReference>
<dbReference type="FunFam" id="2.40.50.140:FF:000024">
    <property type="entry name" value="Lysine--tRNA ligase"/>
    <property type="match status" value="1"/>
</dbReference>
<dbReference type="FunFam" id="3.30.930.10:FF:000001">
    <property type="entry name" value="Lysine--tRNA ligase"/>
    <property type="match status" value="1"/>
</dbReference>
<dbReference type="Gene3D" id="3.30.930.10">
    <property type="entry name" value="Bira Bifunctional Protein, Domain 2"/>
    <property type="match status" value="1"/>
</dbReference>
<dbReference type="Gene3D" id="2.40.50.140">
    <property type="entry name" value="Nucleic acid-binding proteins"/>
    <property type="match status" value="1"/>
</dbReference>
<dbReference type="HAMAP" id="MF_00252">
    <property type="entry name" value="Lys_tRNA_synth_class2"/>
    <property type="match status" value="1"/>
</dbReference>
<dbReference type="InterPro" id="IPR004364">
    <property type="entry name" value="Aa-tRNA-synt_II"/>
</dbReference>
<dbReference type="InterPro" id="IPR006195">
    <property type="entry name" value="aa-tRNA-synth_II"/>
</dbReference>
<dbReference type="InterPro" id="IPR045864">
    <property type="entry name" value="aa-tRNA-synth_II/BPL/LPL"/>
</dbReference>
<dbReference type="InterPro" id="IPR002313">
    <property type="entry name" value="Lys-tRNA-ligase_II"/>
</dbReference>
<dbReference type="InterPro" id="IPR044136">
    <property type="entry name" value="Lys-tRNA-ligase_II_N"/>
</dbReference>
<dbReference type="InterPro" id="IPR018149">
    <property type="entry name" value="Lys-tRNA-synth_II_C"/>
</dbReference>
<dbReference type="InterPro" id="IPR012340">
    <property type="entry name" value="NA-bd_OB-fold"/>
</dbReference>
<dbReference type="InterPro" id="IPR004365">
    <property type="entry name" value="NA-bd_OB_tRNA"/>
</dbReference>
<dbReference type="NCBIfam" id="TIGR00499">
    <property type="entry name" value="lysS_bact"/>
    <property type="match status" value="1"/>
</dbReference>
<dbReference type="NCBIfam" id="NF001756">
    <property type="entry name" value="PRK00484.1"/>
    <property type="match status" value="1"/>
</dbReference>
<dbReference type="PANTHER" id="PTHR42918:SF15">
    <property type="entry name" value="LYSINE--TRNA LIGASE, CHLOROPLASTIC_MITOCHONDRIAL"/>
    <property type="match status" value="1"/>
</dbReference>
<dbReference type="PANTHER" id="PTHR42918">
    <property type="entry name" value="LYSYL-TRNA SYNTHETASE"/>
    <property type="match status" value="1"/>
</dbReference>
<dbReference type="Pfam" id="PF00152">
    <property type="entry name" value="tRNA-synt_2"/>
    <property type="match status" value="1"/>
</dbReference>
<dbReference type="Pfam" id="PF01336">
    <property type="entry name" value="tRNA_anti-codon"/>
    <property type="match status" value="1"/>
</dbReference>
<dbReference type="PRINTS" id="PR00982">
    <property type="entry name" value="TRNASYNTHLYS"/>
</dbReference>
<dbReference type="SUPFAM" id="SSF55681">
    <property type="entry name" value="Class II aaRS and biotin synthetases"/>
    <property type="match status" value="1"/>
</dbReference>
<dbReference type="SUPFAM" id="SSF50249">
    <property type="entry name" value="Nucleic acid-binding proteins"/>
    <property type="match status" value="1"/>
</dbReference>
<dbReference type="PROSITE" id="PS50862">
    <property type="entry name" value="AA_TRNA_LIGASE_II"/>
    <property type="match status" value="1"/>
</dbReference>
<evidence type="ECO:0000255" key="1">
    <source>
        <dbReference type="HAMAP-Rule" id="MF_00252"/>
    </source>
</evidence>
<evidence type="ECO:0000256" key="2">
    <source>
        <dbReference type="SAM" id="MobiDB-lite"/>
    </source>
</evidence>
<reference key="1">
    <citation type="submission" date="2006-03" db="EMBL/GenBank/DDBJ databases">
        <title>Complete sequence of chromosome of Psychrobacter cryohalolentis K5.</title>
        <authorList>
            <consortium name="US DOE Joint Genome Institute"/>
            <person name="Copeland A."/>
            <person name="Lucas S."/>
            <person name="Lapidus A."/>
            <person name="Barry K."/>
            <person name="Detter J.C."/>
            <person name="Glavina T."/>
            <person name="Hammon N."/>
            <person name="Israni S."/>
            <person name="Dalin E."/>
            <person name="Tice H."/>
            <person name="Pitluck S."/>
            <person name="Brettin T."/>
            <person name="Bruce D."/>
            <person name="Han C."/>
            <person name="Tapia R."/>
            <person name="Sims D.R."/>
            <person name="Gilna P."/>
            <person name="Schmutz J."/>
            <person name="Larimer F."/>
            <person name="Land M."/>
            <person name="Hauser L."/>
            <person name="Kyrpides N."/>
            <person name="Kim E."/>
            <person name="Richardson P."/>
        </authorList>
    </citation>
    <scope>NUCLEOTIDE SEQUENCE [LARGE SCALE GENOMIC DNA]</scope>
    <source>
        <strain>ATCC BAA-1226 / DSM 17306 / VKM B-2378 / K5</strain>
    </source>
</reference>
<sequence>MSKPNNQNQQNNQEPAPEDANELIAQLQAKLDDIVASGKQPYPNTFKRTDYAQDLQAAFEGISKQEIADNDAKGEKTQVNVAGRVMLNRGAFIVIQDMTGRIQLYVARKELDEKTLADIKSLDLGDIVGVSGYIGRSGKGDLYVHIEEIELLTKALRPMPNKFHGLADVEARYRNRHLDLMTNETTRDTFMVRSQVISGIRKFMLNERFMEVETPMMHPIPGGAVARPFVTHHNALDMPLYLRIAPELYLKRLVVGGFEKVFEINRSFRNEGVSTRHNPEFTMIEFYQAYADYHDLMDLTERLFNELATDILGTTEITYQEEAISLKAPFIRLSMSDAIAKYAENFDMNRINDREYLAEYASTTLKQQVKDVFGVGKLQTIIFEETAEHQLRQPTFITEYPAETSPLARRSDDNPEITDRFELFVGGRELANGFSELNDPEDQAERFLGQVAEKDAGDDEAMHFDAEYIEALSYGLPPTAGEGIGIDRLVMLLTDSASIRDVILFPHMRRKLEG</sequence>
<organism>
    <name type="scientific">Psychrobacter cryohalolentis (strain ATCC BAA-1226 / DSM 17306 / VKM B-2378 / K5)</name>
    <dbReference type="NCBI Taxonomy" id="335284"/>
    <lineage>
        <taxon>Bacteria</taxon>
        <taxon>Pseudomonadati</taxon>
        <taxon>Pseudomonadota</taxon>
        <taxon>Gammaproteobacteria</taxon>
        <taxon>Moraxellales</taxon>
        <taxon>Moraxellaceae</taxon>
        <taxon>Psychrobacter</taxon>
    </lineage>
</organism>
<keyword id="KW-0030">Aminoacyl-tRNA synthetase</keyword>
<keyword id="KW-0067">ATP-binding</keyword>
<keyword id="KW-0963">Cytoplasm</keyword>
<keyword id="KW-0436">Ligase</keyword>
<keyword id="KW-0460">Magnesium</keyword>
<keyword id="KW-0479">Metal-binding</keyword>
<keyword id="KW-0547">Nucleotide-binding</keyword>
<keyword id="KW-0648">Protein biosynthesis</keyword>
<comment type="catalytic activity">
    <reaction evidence="1">
        <text>tRNA(Lys) + L-lysine + ATP = L-lysyl-tRNA(Lys) + AMP + diphosphate</text>
        <dbReference type="Rhea" id="RHEA:20792"/>
        <dbReference type="Rhea" id="RHEA-COMP:9696"/>
        <dbReference type="Rhea" id="RHEA-COMP:9697"/>
        <dbReference type="ChEBI" id="CHEBI:30616"/>
        <dbReference type="ChEBI" id="CHEBI:32551"/>
        <dbReference type="ChEBI" id="CHEBI:33019"/>
        <dbReference type="ChEBI" id="CHEBI:78442"/>
        <dbReference type="ChEBI" id="CHEBI:78529"/>
        <dbReference type="ChEBI" id="CHEBI:456215"/>
        <dbReference type="EC" id="6.1.1.6"/>
    </reaction>
</comment>
<comment type="cofactor">
    <cofactor evidence="1">
        <name>Mg(2+)</name>
        <dbReference type="ChEBI" id="CHEBI:18420"/>
    </cofactor>
    <text evidence="1">Binds 3 Mg(2+) ions per subunit.</text>
</comment>
<comment type="subunit">
    <text evidence="1">Homodimer.</text>
</comment>
<comment type="subcellular location">
    <subcellularLocation>
        <location evidence="1">Cytoplasm</location>
    </subcellularLocation>
</comment>
<comment type="similarity">
    <text evidence="1">Belongs to the class-II aminoacyl-tRNA synthetase family.</text>
</comment>
<name>SYK_PSYCK</name>
<feature type="chain" id="PRO_1000012916" description="Lysine--tRNA ligase">
    <location>
        <begin position="1"/>
        <end position="514"/>
    </location>
</feature>
<feature type="region of interest" description="Disordered" evidence="2">
    <location>
        <begin position="1"/>
        <end position="21"/>
    </location>
</feature>
<feature type="compositionally biased region" description="Low complexity" evidence="2">
    <location>
        <begin position="1"/>
        <end position="13"/>
    </location>
</feature>
<feature type="binding site" evidence="1">
    <location>
        <position position="422"/>
    </location>
    <ligand>
        <name>Mg(2+)</name>
        <dbReference type="ChEBI" id="CHEBI:18420"/>
        <label>1</label>
    </ligand>
</feature>
<feature type="binding site" evidence="1">
    <location>
        <position position="429"/>
    </location>
    <ligand>
        <name>Mg(2+)</name>
        <dbReference type="ChEBI" id="CHEBI:18420"/>
        <label>1</label>
    </ligand>
</feature>
<feature type="binding site" evidence="1">
    <location>
        <position position="429"/>
    </location>
    <ligand>
        <name>Mg(2+)</name>
        <dbReference type="ChEBI" id="CHEBI:18420"/>
        <label>2</label>
    </ligand>
</feature>
<proteinExistence type="inferred from homology"/>
<accession>Q1QAW5</accession>